<name>KA102_CENNO</name>
<proteinExistence type="evidence at protein level"/>
<organism>
    <name type="scientific">Centruroides noxius</name>
    <name type="common">Mexican scorpion</name>
    <dbReference type="NCBI Taxonomy" id="6878"/>
    <lineage>
        <taxon>Eukaryota</taxon>
        <taxon>Metazoa</taxon>
        <taxon>Ecdysozoa</taxon>
        <taxon>Arthropoda</taxon>
        <taxon>Chelicerata</taxon>
        <taxon>Arachnida</taxon>
        <taxon>Scorpiones</taxon>
        <taxon>Buthida</taxon>
        <taxon>Buthoidea</taxon>
        <taxon>Buthidae</taxon>
        <taxon>Centruroides</taxon>
    </lineage>
</organism>
<sequence>VACVYRTCDKDCTSRKYRSGKCINNACKCYPY</sequence>
<comment type="function">
    <text evidence="3">Blocks Shaker B potassium-channels (Kv1.1/KCNA1 sub-family).</text>
</comment>
<comment type="subcellular location">
    <subcellularLocation>
        <location evidence="3">Secreted</location>
    </subcellularLocation>
</comment>
<comment type="tissue specificity">
    <text evidence="6">Expressed by the venom gland.</text>
</comment>
<comment type="domain">
    <text evidence="5">Has the structural arrangement of an alpha-helix connected to antiparallel beta-sheets by disulfide bonds (CS-alpha/beta).</text>
</comment>
<comment type="similarity">
    <text evidence="5">Belongs to the short scorpion toxin superfamily. Potassium channel inhibitor family. Alpha-KTx 10 subfamily.</text>
</comment>
<accession>P58504</accession>
<protein>
    <recommendedName>
        <fullName>Potassium channel toxin alpha-KTx 10.2</fullName>
    </recommendedName>
    <alternativeName>
        <fullName evidence="4">Cobatoxin-2</fullName>
        <shortName evidence="4">CoTx2</shortName>
    </alternativeName>
</protein>
<reference key="1">
    <citation type="journal article" date="1998" name="Eur. J. Biochem.">
        <title>Cobatoxins 1 and 2 from Centruroides noxius Hoffmann constitute a new subfamily of potassium-channel-blocking scorpion toxins.</title>
        <authorList>
            <person name="Selisko B."/>
            <person name="Garcia C."/>
            <person name="Becerril B."/>
            <person name="Gomez-Lagunas F."/>
            <person name="Garay C."/>
            <person name="Possani L.D."/>
        </authorList>
    </citation>
    <scope>PROTEIN SEQUENCE</scope>
    <scope>FUNCTION</scope>
    <scope>SUBCELLULAR LOCATION</scope>
    <source>
        <tissue>Venom</tissue>
    </source>
</reference>
<evidence type="ECO:0000250" key="1"/>
<evidence type="ECO:0000250" key="2">
    <source>
        <dbReference type="UniProtKB" id="O46028"/>
    </source>
</evidence>
<evidence type="ECO:0000269" key="3">
    <source>
    </source>
</evidence>
<evidence type="ECO:0000303" key="4">
    <source>
    </source>
</evidence>
<evidence type="ECO:0000305" key="5"/>
<evidence type="ECO:0000305" key="6">
    <source>
    </source>
</evidence>
<feature type="peptide" id="PRO_0000044907" description="Potassium channel toxin alpha-KTx 10.2" evidence="3">
    <location>
        <begin position="1"/>
        <end position="32"/>
    </location>
</feature>
<feature type="site" description="Basic residue of the functional dyad" evidence="1">
    <location>
        <position position="21"/>
    </location>
</feature>
<feature type="site" description="Aromatic residue of the functional dyad" evidence="1">
    <location>
        <position position="30"/>
    </location>
</feature>
<feature type="modified residue" description="Tyrosine amide" evidence="2">
    <location>
        <position position="32"/>
    </location>
</feature>
<feature type="disulfide bond" evidence="2">
    <location>
        <begin position="3"/>
        <end position="22"/>
    </location>
</feature>
<feature type="disulfide bond" evidence="2">
    <location>
        <begin position="8"/>
        <end position="12"/>
    </location>
</feature>
<feature type="disulfide bond" evidence="2">
    <location>
        <begin position="27"/>
        <end position="29"/>
    </location>
</feature>
<keyword id="KW-0027">Amidation</keyword>
<keyword id="KW-0903">Direct protein sequencing</keyword>
<keyword id="KW-1015">Disulfide bond</keyword>
<keyword id="KW-0872">Ion channel impairing toxin</keyword>
<keyword id="KW-0528">Neurotoxin</keyword>
<keyword id="KW-0632">Potassium channel impairing toxin</keyword>
<keyword id="KW-0964">Secreted</keyword>
<keyword id="KW-0800">Toxin</keyword>
<keyword id="KW-1220">Voltage-gated potassium channel impairing toxin</keyword>
<dbReference type="SMR" id="P58504"/>
<dbReference type="GO" id="GO:0005576">
    <property type="term" value="C:extracellular region"/>
    <property type="evidence" value="ECO:0007669"/>
    <property type="project" value="UniProtKB-SubCell"/>
</dbReference>
<dbReference type="GO" id="GO:0015459">
    <property type="term" value="F:potassium channel regulator activity"/>
    <property type="evidence" value="ECO:0007669"/>
    <property type="project" value="UniProtKB-KW"/>
</dbReference>
<dbReference type="GO" id="GO:0090729">
    <property type="term" value="F:toxin activity"/>
    <property type="evidence" value="ECO:0007669"/>
    <property type="project" value="UniProtKB-KW"/>
</dbReference>
<dbReference type="Gene3D" id="3.30.30.10">
    <property type="entry name" value="Knottin, scorpion toxin-like"/>
    <property type="match status" value="1"/>
</dbReference>
<dbReference type="InterPro" id="IPR036574">
    <property type="entry name" value="Scorpion_toxin-like_sf"/>
</dbReference>
<dbReference type="SUPFAM" id="SSF57095">
    <property type="entry name" value="Scorpion toxin-like"/>
    <property type="match status" value="1"/>
</dbReference>
<dbReference type="PROSITE" id="PS01138">
    <property type="entry name" value="SCORP_SHORT_TOXIN"/>
    <property type="match status" value="1"/>
</dbReference>